<feature type="chain" id="PRO_0000114292" description="Chromosomal replication initiator protein DnaA">
    <location>
        <begin position="1"/>
        <end position="478"/>
    </location>
</feature>
<feature type="region of interest" description="Domain I, interacts with DnaA modulators" evidence="1">
    <location>
        <begin position="1"/>
        <end position="95"/>
    </location>
</feature>
<feature type="region of interest" description="Domain II" evidence="1">
    <location>
        <begin position="96"/>
        <end position="141"/>
    </location>
</feature>
<feature type="region of interest" description="Domain III, AAA+ region" evidence="1">
    <location>
        <begin position="142"/>
        <end position="358"/>
    </location>
</feature>
<feature type="region of interest" description="Domain IV, binds dsDNA" evidence="1">
    <location>
        <begin position="359"/>
        <end position="478"/>
    </location>
</feature>
<feature type="binding site" evidence="1">
    <location>
        <position position="186"/>
    </location>
    <ligand>
        <name>ATP</name>
        <dbReference type="ChEBI" id="CHEBI:30616"/>
    </ligand>
</feature>
<feature type="binding site" evidence="1">
    <location>
        <position position="188"/>
    </location>
    <ligand>
        <name>ATP</name>
        <dbReference type="ChEBI" id="CHEBI:30616"/>
    </ligand>
</feature>
<feature type="binding site" evidence="1">
    <location>
        <position position="189"/>
    </location>
    <ligand>
        <name>ATP</name>
        <dbReference type="ChEBI" id="CHEBI:30616"/>
    </ligand>
</feature>
<feature type="binding site" evidence="1">
    <location>
        <position position="190"/>
    </location>
    <ligand>
        <name>ATP</name>
        <dbReference type="ChEBI" id="CHEBI:30616"/>
    </ligand>
</feature>
<organism>
    <name type="scientific">Tropheryma whipplei (strain TW08/27)</name>
    <name type="common">Whipple's bacillus</name>
    <dbReference type="NCBI Taxonomy" id="218496"/>
    <lineage>
        <taxon>Bacteria</taxon>
        <taxon>Bacillati</taxon>
        <taxon>Actinomycetota</taxon>
        <taxon>Actinomycetes</taxon>
        <taxon>Micrococcales</taxon>
        <taxon>Tropherymataceae</taxon>
        <taxon>Tropheryma</taxon>
    </lineage>
</organism>
<name>DNAA_TROW8</name>
<keyword id="KW-0067">ATP-binding</keyword>
<keyword id="KW-0963">Cytoplasm</keyword>
<keyword id="KW-0235">DNA replication</keyword>
<keyword id="KW-0238">DNA-binding</keyword>
<keyword id="KW-0446">Lipid-binding</keyword>
<keyword id="KW-0547">Nucleotide-binding</keyword>
<protein>
    <recommendedName>
        <fullName evidence="1">Chromosomal replication initiator protein DnaA</fullName>
    </recommendedName>
</protein>
<accession>Q83NZ5</accession>
<sequence>MNKTLNPQEVWIKAVRNLEGFFSSPRVIGYLKKASPSIEGESLIITFPNSHLASVMDDIEVYDATKKTILDSYPSIKEIKITISPDVLEKEITEEINDLVQSMEEEDFALIDHTKPVIPNFFDQNTRVNFGGGPNNHHPTTGVNPRFTFDNFVVGKSNELARAASISAAERPGKSFNPLFIYGDSGVGKTHLLHSIGNYAKFLFPSLRIKYVSSEDFTNDFINSISSGTSQKFQEKYRQIDILMVDDIQFLQKKQETQESFFHTFNSLHNSSRQLVISSDLPPKQLMGFEDRMRSRFECGLVCDIQKPDLETRIAILQKKCQNEKKEVSMEILTYIASCFSSSVRELEGALLRIFALASFNKEEINMTLAQKVLEDLGAQRGDKIDPIEIIEITAKHYDLAASDLCGNSRVANISIARQIAMYLCRELTDVSLPKLGYIFGRDHSTIIYATRRISDLIGKDRKTFSDIYKLTQFILRR</sequence>
<gene>
    <name evidence="1" type="primary">dnaA</name>
    <name type="ordered locus">TW001</name>
</gene>
<proteinExistence type="inferred from homology"/>
<comment type="function">
    <text evidence="1">Plays an essential role in the initiation and regulation of chromosomal replication. ATP-DnaA binds to the origin of replication (oriC) to initiate formation of the DNA replication initiation complex once per cell cycle. Binds the DnaA box (a 9 base pair repeat at the origin) and separates the double-stranded (ds)DNA. Forms a right-handed helical filament on oriC DNA; dsDNA binds to the exterior of the filament while single-stranded (ss)DNA is stabiized in the filament's interior. The ATP-DnaA-oriC complex binds and stabilizes one strand of the AT-rich DNA unwinding element (DUE), permitting loading of DNA polymerase. After initiation quickly degrades to an ADP-DnaA complex that is not apt for DNA replication. Binds acidic phospholipids.</text>
</comment>
<comment type="subunit">
    <text evidence="1">Oligomerizes as a right-handed, spiral filament on DNA at oriC.</text>
</comment>
<comment type="subcellular location">
    <subcellularLocation>
        <location evidence="1">Cytoplasm</location>
    </subcellularLocation>
</comment>
<comment type="domain">
    <text evidence="1">Domain I is involved in oligomerization and binding regulators, domain II is flexibile and of varying length in different bacteria, domain III forms the AAA+ region, while domain IV binds dsDNA.</text>
</comment>
<comment type="similarity">
    <text evidence="1">Belongs to the DnaA family.</text>
</comment>
<evidence type="ECO:0000255" key="1">
    <source>
        <dbReference type="HAMAP-Rule" id="MF_00377"/>
    </source>
</evidence>
<reference key="1">
    <citation type="journal article" date="2003" name="Lancet">
        <title>Sequencing and analysis of the genome of the Whipple's disease bacterium Tropheryma whipplei.</title>
        <authorList>
            <person name="Bentley S.D."/>
            <person name="Maiwald M."/>
            <person name="Murphy L.D."/>
            <person name="Pallen M.J."/>
            <person name="Yeats C.A."/>
            <person name="Dover L.G."/>
            <person name="Norbertczak H.T."/>
            <person name="Besra G.S."/>
            <person name="Quail M.A."/>
            <person name="Harris D.E."/>
            <person name="von Herbay A."/>
            <person name="Goble A."/>
            <person name="Rutter S."/>
            <person name="Squares R."/>
            <person name="Squares S."/>
            <person name="Barrell B.G."/>
            <person name="Parkhill J."/>
            <person name="Relman D.A."/>
        </authorList>
    </citation>
    <scope>NUCLEOTIDE SEQUENCE [LARGE SCALE GENOMIC DNA]</scope>
    <source>
        <strain>TW08/27</strain>
    </source>
</reference>
<dbReference type="EMBL" id="BX251410">
    <property type="protein sequence ID" value="CAD66693.1"/>
    <property type="molecule type" value="Genomic_DNA"/>
</dbReference>
<dbReference type="RefSeq" id="WP_011095974.1">
    <property type="nucleotide sequence ID" value="NC_004551.1"/>
</dbReference>
<dbReference type="SMR" id="Q83NZ5"/>
<dbReference type="GeneID" id="67387779"/>
<dbReference type="KEGG" id="tws:TW001"/>
<dbReference type="HOGENOM" id="CLU_026910_3_1_11"/>
<dbReference type="GO" id="GO:0005737">
    <property type="term" value="C:cytoplasm"/>
    <property type="evidence" value="ECO:0007669"/>
    <property type="project" value="UniProtKB-SubCell"/>
</dbReference>
<dbReference type="GO" id="GO:0005886">
    <property type="term" value="C:plasma membrane"/>
    <property type="evidence" value="ECO:0007669"/>
    <property type="project" value="TreeGrafter"/>
</dbReference>
<dbReference type="GO" id="GO:0005524">
    <property type="term" value="F:ATP binding"/>
    <property type="evidence" value="ECO:0007669"/>
    <property type="project" value="UniProtKB-UniRule"/>
</dbReference>
<dbReference type="GO" id="GO:0016887">
    <property type="term" value="F:ATP hydrolysis activity"/>
    <property type="evidence" value="ECO:0007669"/>
    <property type="project" value="InterPro"/>
</dbReference>
<dbReference type="GO" id="GO:0003688">
    <property type="term" value="F:DNA replication origin binding"/>
    <property type="evidence" value="ECO:0007669"/>
    <property type="project" value="UniProtKB-UniRule"/>
</dbReference>
<dbReference type="GO" id="GO:0008289">
    <property type="term" value="F:lipid binding"/>
    <property type="evidence" value="ECO:0007669"/>
    <property type="project" value="UniProtKB-KW"/>
</dbReference>
<dbReference type="GO" id="GO:0006270">
    <property type="term" value="P:DNA replication initiation"/>
    <property type="evidence" value="ECO:0007669"/>
    <property type="project" value="UniProtKB-UniRule"/>
</dbReference>
<dbReference type="GO" id="GO:0006275">
    <property type="term" value="P:regulation of DNA replication"/>
    <property type="evidence" value="ECO:0007669"/>
    <property type="project" value="UniProtKB-UniRule"/>
</dbReference>
<dbReference type="CDD" id="cd00009">
    <property type="entry name" value="AAA"/>
    <property type="match status" value="1"/>
</dbReference>
<dbReference type="CDD" id="cd06571">
    <property type="entry name" value="Bac_DnaA_C"/>
    <property type="match status" value="1"/>
</dbReference>
<dbReference type="FunFam" id="3.40.50.300:FF:000668">
    <property type="entry name" value="Chromosomal replication initiator protein DnaA"/>
    <property type="match status" value="1"/>
</dbReference>
<dbReference type="Gene3D" id="1.10.1750.10">
    <property type="match status" value="1"/>
</dbReference>
<dbReference type="Gene3D" id="1.10.8.60">
    <property type="match status" value="1"/>
</dbReference>
<dbReference type="Gene3D" id="3.40.50.300">
    <property type="entry name" value="P-loop containing nucleotide triphosphate hydrolases"/>
    <property type="match status" value="1"/>
</dbReference>
<dbReference type="HAMAP" id="MF_00377">
    <property type="entry name" value="DnaA_bact"/>
    <property type="match status" value="1"/>
</dbReference>
<dbReference type="InterPro" id="IPR003593">
    <property type="entry name" value="AAA+_ATPase"/>
</dbReference>
<dbReference type="InterPro" id="IPR001957">
    <property type="entry name" value="Chromosome_initiator_DnaA"/>
</dbReference>
<dbReference type="InterPro" id="IPR020591">
    <property type="entry name" value="Chromosome_initiator_DnaA-like"/>
</dbReference>
<dbReference type="InterPro" id="IPR018312">
    <property type="entry name" value="Chromosome_initiator_DnaA_CS"/>
</dbReference>
<dbReference type="InterPro" id="IPR013159">
    <property type="entry name" value="DnaA_C"/>
</dbReference>
<dbReference type="InterPro" id="IPR013317">
    <property type="entry name" value="DnaA_dom"/>
</dbReference>
<dbReference type="InterPro" id="IPR027417">
    <property type="entry name" value="P-loop_NTPase"/>
</dbReference>
<dbReference type="InterPro" id="IPR010921">
    <property type="entry name" value="Trp_repressor/repl_initiator"/>
</dbReference>
<dbReference type="NCBIfam" id="TIGR00362">
    <property type="entry name" value="DnaA"/>
    <property type="match status" value="1"/>
</dbReference>
<dbReference type="PANTHER" id="PTHR30050">
    <property type="entry name" value="CHROMOSOMAL REPLICATION INITIATOR PROTEIN DNAA"/>
    <property type="match status" value="1"/>
</dbReference>
<dbReference type="PANTHER" id="PTHR30050:SF2">
    <property type="entry name" value="CHROMOSOMAL REPLICATION INITIATOR PROTEIN DNAA"/>
    <property type="match status" value="1"/>
</dbReference>
<dbReference type="Pfam" id="PF00308">
    <property type="entry name" value="Bac_DnaA"/>
    <property type="match status" value="1"/>
</dbReference>
<dbReference type="Pfam" id="PF08299">
    <property type="entry name" value="Bac_DnaA_C"/>
    <property type="match status" value="1"/>
</dbReference>
<dbReference type="PRINTS" id="PR00051">
    <property type="entry name" value="DNAA"/>
</dbReference>
<dbReference type="SMART" id="SM00382">
    <property type="entry name" value="AAA"/>
    <property type="match status" value="1"/>
</dbReference>
<dbReference type="SMART" id="SM00760">
    <property type="entry name" value="Bac_DnaA_C"/>
    <property type="match status" value="1"/>
</dbReference>
<dbReference type="SUPFAM" id="SSF52540">
    <property type="entry name" value="P-loop containing nucleoside triphosphate hydrolases"/>
    <property type="match status" value="1"/>
</dbReference>
<dbReference type="SUPFAM" id="SSF48295">
    <property type="entry name" value="TrpR-like"/>
    <property type="match status" value="1"/>
</dbReference>
<dbReference type="PROSITE" id="PS01008">
    <property type="entry name" value="DNAA"/>
    <property type="match status" value="1"/>
</dbReference>